<evidence type="ECO:0000255" key="1">
    <source>
        <dbReference type="HAMAP-Rule" id="MF_00501"/>
    </source>
</evidence>
<evidence type="ECO:0000305" key="2"/>
<organism>
    <name type="scientific">Aliivibrio salmonicida (strain LFI1238)</name>
    <name type="common">Vibrio salmonicida (strain LFI1238)</name>
    <dbReference type="NCBI Taxonomy" id="316275"/>
    <lineage>
        <taxon>Bacteria</taxon>
        <taxon>Pseudomonadati</taxon>
        <taxon>Pseudomonadota</taxon>
        <taxon>Gammaproteobacteria</taxon>
        <taxon>Vibrionales</taxon>
        <taxon>Vibrionaceae</taxon>
        <taxon>Aliivibrio</taxon>
    </lineage>
</organism>
<reference key="1">
    <citation type="journal article" date="2008" name="BMC Genomics">
        <title>The genome sequence of the fish pathogen Aliivibrio salmonicida strain LFI1238 shows extensive evidence of gene decay.</title>
        <authorList>
            <person name="Hjerde E."/>
            <person name="Lorentzen M.S."/>
            <person name="Holden M.T."/>
            <person name="Seeger K."/>
            <person name="Paulsen S."/>
            <person name="Bason N."/>
            <person name="Churcher C."/>
            <person name="Harris D."/>
            <person name="Norbertczak H."/>
            <person name="Quail M.A."/>
            <person name="Sanders S."/>
            <person name="Thurston S."/>
            <person name="Parkhill J."/>
            <person name="Willassen N.P."/>
            <person name="Thomson N.R."/>
        </authorList>
    </citation>
    <scope>NUCLEOTIDE SEQUENCE [LARGE SCALE GENOMIC DNA]</scope>
    <source>
        <strain>LFI1238</strain>
    </source>
</reference>
<accession>B6EMM4</accession>
<name>RL31_ALISL</name>
<feature type="chain" id="PRO_1000126556" description="Large ribosomal subunit protein bL31">
    <location>
        <begin position="1"/>
        <end position="72"/>
    </location>
</feature>
<feature type="binding site" evidence="1">
    <location>
        <position position="16"/>
    </location>
    <ligand>
        <name>Zn(2+)</name>
        <dbReference type="ChEBI" id="CHEBI:29105"/>
    </ligand>
</feature>
<feature type="binding site" evidence="1">
    <location>
        <position position="18"/>
    </location>
    <ligand>
        <name>Zn(2+)</name>
        <dbReference type="ChEBI" id="CHEBI:29105"/>
    </ligand>
</feature>
<feature type="binding site" evidence="1">
    <location>
        <position position="38"/>
    </location>
    <ligand>
        <name>Zn(2+)</name>
        <dbReference type="ChEBI" id="CHEBI:29105"/>
    </ligand>
</feature>
<feature type="binding site" evidence="1">
    <location>
        <position position="41"/>
    </location>
    <ligand>
        <name>Zn(2+)</name>
        <dbReference type="ChEBI" id="CHEBI:29105"/>
    </ligand>
</feature>
<keyword id="KW-0479">Metal-binding</keyword>
<keyword id="KW-0687">Ribonucleoprotein</keyword>
<keyword id="KW-0689">Ribosomal protein</keyword>
<keyword id="KW-0694">RNA-binding</keyword>
<keyword id="KW-0699">rRNA-binding</keyword>
<keyword id="KW-0862">Zinc</keyword>
<sequence length="72" mass="7979">MKVGIHPEYKAVKATCSCGNEFEFKSALGKDTIHLDVCGECHPFYTGKQRIVDTGGRVDRFNKRFGAIGSKK</sequence>
<proteinExistence type="inferred from homology"/>
<comment type="function">
    <text evidence="1">Binds the 23S rRNA.</text>
</comment>
<comment type="cofactor">
    <cofactor evidence="1">
        <name>Zn(2+)</name>
        <dbReference type="ChEBI" id="CHEBI:29105"/>
    </cofactor>
    <text evidence="1">Binds 1 zinc ion per subunit.</text>
</comment>
<comment type="subunit">
    <text evidence="1">Part of the 50S ribosomal subunit.</text>
</comment>
<comment type="similarity">
    <text evidence="1">Belongs to the bacterial ribosomal protein bL31 family. Type A subfamily.</text>
</comment>
<dbReference type="EMBL" id="FM178379">
    <property type="protein sequence ID" value="CAQ80428.1"/>
    <property type="molecule type" value="Genomic_DNA"/>
</dbReference>
<dbReference type="RefSeq" id="WP_012551187.1">
    <property type="nucleotide sequence ID" value="NC_011312.1"/>
</dbReference>
<dbReference type="SMR" id="B6EMM4"/>
<dbReference type="KEGG" id="vsa:VSAL_I2744"/>
<dbReference type="eggNOG" id="COG0254">
    <property type="taxonomic scope" value="Bacteria"/>
</dbReference>
<dbReference type="HOGENOM" id="CLU_114306_4_3_6"/>
<dbReference type="Proteomes" id="UP000001730">
    <property type="component" value="Chromosome 1"/>
</dbReference>
<dbReference type="GO" id="GO:1990904">
    <property type="term" value="C:ribonucleoprotein complex"/>
    <property type="evidence" value="ECO:0007669"/>
    <property type="project" value="UniProtKB-KW"/>
</dbReference>
<dbReference type="GO" id="GO:0005840">
    <property type="term" value="C:ribosome"/>
    <property type="evidence" value="ECO:0007669"/>
    <property type="project" value="UniProtKB-KW"/>
</dbReference>
<dbReference type="GO" id="GO:0046872">
    <property type="term" value="F:metal ion binding"/>
    <property type="evidence" value="ECO:0007669"/>
    <property type="project" value="UniProtKB-KW"/>
</dbReference>
<dbReference type="GO" id="GO:0019843">
    <property type="term" value="F:rRNA binding"/>
    <property type="evidence" value="ECO:0007669"/>
    <property type="project" value="UniProtKB-KW"/>
</dbReference>
<dbReference type="GO" id="GO:0003735">
    <property type="term" value="F:structural constituent of ribosome"/>
    <property type="evidence" value="ECO:0007669"/>
    <property type="project" value="InterPro"/>
</dbReference>
<dbReference type="GO" id="GO:0006412">
    <property type="term" value="P:translation"/>
    <property type="evidence" value="ECO:0007669"/>
    <property type="project" value="UniProtKB-UniRule"/>
</dbReference>
<dbReference type="Gene3D" id="4.10.830.30">
    <property type="entry name" value="Ribosomal protein L31"/>
    <property type="match status" value="1"/>
</dbReference>
<dbReference type="HAMAP" id="MF_00501">
    <property type="entry name" value="Ribosomal_bL31_1"/>
    <property type="match status" value="1"/>
</dbReference>
<dbReference type="InterPro" id="IPR034704">
    <property type="entry name" value="Ribosomal_bL28/bL31-like_sf"/>
</dbReference>
<dbReference type="InterPro" id="IPR002150">
    <property type="entry name" value="Ribosomal_bL31"/>
</dbReference>
<dbReference type="InterPro" id="IPR027491">
    <property type="entry name" value="Ribosomal_bL31_A"/>
</dbReference>
<dbReference type="InterPro" id="IPR042105">
    <property type="entry name" value="Ribosomal_bL31_sf"/>
</dbReference>
<dbReference type="NCBIfam" id="TIGR00105">
    <property type="entry name" value="L31"/>
    <property type="match status" value="1"/>
</dbReference>
<dbReference type="NCBIfam" id="NF000612">
    <property type="entry name" value="PRK00019.1"/>
    <property type="match status" value="1"/>
</dbReference>
<dbReference type="NCBIfam" id="NF001809">
    <property type="entry name" value="PRK00528.1"/>
    <property type="match status" value="1"/>
</dbReference>
<dbReference type="PANTHER" id="PTHR33280">
    <property type="entry name" value="50S RIBOSOMAL PROTEIN L31, CHLOROPLASTIC"/>
    <property type="match status" value="1"/>
</dbReference>
<dbReference type="PANTHER" id="PTHR33280:SF6">
    <property type="entry name" value="LARGE RIBOSOMAL SUBUNIT PROTEIN BL31A"/>
    <property type="match status" value="1"/>
</dbReference>
<dbReference type="Pfam" id="PF01197">
    <property type="entry name" value="Ribosomal_L31"/>
    <property type="match status" value="1"/>
</dbReference>
<dbReference type="PRINTS" id="PR01249">
    <property type="entry name" value="RIBOSOMALL31"/>
</dbReference>
<dbReference type="SUPFAM" id="SSF143800">
    <property type="entry name" value="L28p-like"/>
    <property type="match status" value="1"/>
</dbReference>
<dbReference type="PROSITE" id="PS01143">
    <property type="entry name" value="RIBOSOMAL_L31"/>
    <property type="match status" value="1"/>
</dbReference>
<gene>
    <name evidence="1" type="primary">rpmE</name>
    <name type="ordered locus">VSAL_I2744</name>
</gene>
<protein>
    <recommendedName>
        <fullName evidence="1">Large ribosomal subunit protein bL31</fullName>
    </recommendedName>
    <alternativeName>
        <fullName evidence="2">50S ribosomal protein L31</fullName>
    </alternativeName>
</protein>